<protein>
    <recommendedName>
        <fullName evidence="1">6,7-dimethyl-8-ribityllumazine synthase</fullName>
        <shortName evidence="1">DMRL synthase</shortName>
        <shortName evidence="1">LS</shortName>
        <shortName evidence="1">Lumazine synthase</shortName>
        <ecNumber evidence="1">2.5.1.78</ecNumber>
    </recommendedName>
</protein>
<accession>B3EL33</accession>
<gene>
    <name evidence="1" type="primary">ribH</name>
    <name type="ordered locus">Cphamn1_0291</name>
</gene>
<organism>
    <name type="scientific">Chlorobium phaeobacteroides (strain BS1)</name>
    <dbReference type="NCBI Taxonomy" id="331678"/>
    <lineage>
        <taxon>Bacteria</taxon>
        <taxon>Pseudomonadati</taxon>
        <taxon>Chlorobiota</taxon>
        <taxon>Chlorobiia</taxon>
        <taxon>Chlorobiales</taxon>
        <taxon>Chlorobiaceae</taxon>
        <taxon>Chlorobium/Pelodictyon group</taxon>
        <taxon>Chlorobium</taxon>
    </lineage>
</organism>
<keyword id="KW-0686">Riboflavin biosynthesis</keyword>
<keyword id="KW-0808">Transferase</keyword>
<name>RISB_CHLPB</name>
<comment type="function">
    <text evidence="1">Catalyzes the formation of 6,7-dimethyl-8-ribityllumazine by condensation of 5-amino-6-(D-ribitylamino)uracil with 3,4-dihydroxy-2-butanone 4-phosphate. This is the penultimate step in the biosynthesis of riboflavin.</text>
</comment>
<comment type="catalytic activity">
    <reaction evidence="1">
        <text>(2S)-2-hydroxy-3-oxobutyl phosphate + 5-amino-6-(D-ribitylamino)uracil = 6,7-dimethyl-8-(1-D-ribityl)lumazine + phosphate + 2 H2O + H(+)</text>
        <dbReference type="Rhea" id="RHEA:26152"/>
        <dbReference type="ChEBI" id="CHEBI:15377"/>
        <dbReference type="ChEBI" id="CHEBI:15378"/>
        <dbReference type="ChEBI" id="CHEBI:15934"/>
        <dbReference type="ChEBI" id="CHEBI:43474"/>
        <dbReference type="ChEBI" id="CHEBI:58201"/>
        <dbReference type="ChEBI" id="CHEBI:58830"/>
        <dbReference type="EC" id="2.5.1.78"/>
    </reaction>
</comment>
<comment type="pathway">
    <text evidence="1">Cofactor biosynthesis; riboflavin biosynthesis; riboflavin from 2-hydroxy-3-oxobutyl phosphate and 5-amino-6-(D-ribitylamino)uracil: step 1/2.</text>
</comment>
<comment type="similarity">
    <text evidence="1">Belongs to the DMRL synthase family.</text>
</comment>
<sequence length="155" mass="16389">MSIKTIEGTLEATNLKFALVVSRFNDFIGQKLVEGAVDCIVRHGGSEENIAVYKCPGAFELPAVAKKAALTGRYDAVITLGAIIRGSTSHYDVIAAEATKGVAQAGLETMIPITFGVLTTENLEQAIERAGTKAGNKGFDAALAAIEMVNLYRQV</sequence>
<proteinExistence type="inferred from homology"/>
<feature type="chain" id="PRO_1000098172" description="6,7-dimethyl-8-ribityllumazine synthase">
    <location>
        <begin position="1"/>
        <end position="155"/>
    </location>
</feature>
<feature type="active site" description="Proton donor" evidence="1">
    <location>
        <position position="90"/>
    </location>
</feature>
<feature type="binding site" evidence="1">
    <location>
        <position position="24"/>
    </location>
    <ligand>
        <name>5-amino-6-(D-ribitylamino)uracil</name>
        <dbReference type="ChEBI" id="CHEBI:15934"/>
    </ligand>
</feature>
<feature type="binding site" evidence="1">
    <location>
        <begin position="58"/>
        <end position="60"/>
    </location>
    <ligand>
        <name>5-amino-6-(D-ribitylamino)uracil</name>
        <dbReference type="ChEBI" id="CHEBI:15934"/>
    </ligand>
</feature>
<feature type="binding site" evidence="1">
    <location>
        <begin position="82"/>
        <end position="84"/>
    </location>
    <ligand>
        <name>5-amino-6-(D-ribitylamino)uracil</name>
        <dbReference type="ChEBI" id="CHEBI:15934"/>
    </ligand>
</feature>
<feature type="binding site" evidence="1">
    <location>
        <begin position="87"/>
        <end position="88"/>
    </location>
    <ligand>
        <name>(2S)-2-hydroxy-3-oxobutyl phosphate</name>
        <dbReference type="ChEBI" id="CHEBI:58830"/>
    </ligand>
</feature>
<feature type="binding site" evidence="1">
    <location>
        <position position="115"/>
    </location>
    <ligand>
        <name>5-amino-6-(D-ribitylamino)uracil</name>
        <dbReference type="ChEBI" id="CHEBI:15934"/>
    </ligand>
</feature>
<feature type="binding site" evidence="1">
    <location>
        <position position="129"/>
    </location>
    <ligand>
        <name>(2S)-2-hydroxy-3-oxobutyl phosphate</name>
        <dbReference type="ChEBI" id="CHEBI:58830"/>
    </ligand>
</feature>
<evidence type="ECO:0000255" key="1">
    <source>
        <dbReference type="HAMAP-Rule" id="MF_00178"/>
    </source>
</evidence>
<dbReference type="EC" id="2.5.1.78" evidence="1"/>
<dbReference type="EMBL" id="CP001101">
    <property type="protein sequence ID" value="ACE03260.1"/>
    <property type="molecule type" value="Genomic_DNA"/>
</dbReference>
<dbReference type="SMR" id="B3EL33"/>
<dbReference type="STRING" id="331678.Cphamn1_0291"/>
<dbReference type="KEGG" id="cpb:Cphamn1_0291"/>
<dbReference type="eggNOG" id="COG0054">
    <property type="taxonomic scope" value="Bacteria"/>
</dbReference>
<dbReference type="HOGENOM" id="CLU_089358_1_1_10"/>
<dbReference type="OrthoDB" id="9809709at2"/>
<dbReference type="UniPathway" id="UPA00275">
    <property type="reaction ID" value="UER00404"/>
</dbReference>
<dbReference type="GO" id="GO:0005829">
    <property type="term" value="C:cytosol"/>
    <property type="evidence" value="ECO:0007669"/>
    <property type="project" value="TreeGrafter"/>
</dbReference>
<dbReference type="GO" id="GO:0009349">
    <property type="term" value="C:riboflavin synthase complex"/>
    <property type="evidence" value="ECO:0007669"/>
    <property type="project" value="InterPro"/>
</dbReference>
<dbReference type="GO" id="GO:0000906">
    <property type="term" value="F:6,7-dimethyl-8-ribityllumazine synthase activity"/>
    <property type="evidence" value="ECO:0007669"/>
    <property type="project" value="UniProtKB-UniRule"/>
</dbReference>
<dbReference type="GO" id="GO:0009231">
    <property type="term" value="P:riboflavin biosynthetic process"/>
    <property type="evidence" value="ECO:0007669"/>
    <property type="project" value="UniProtKB-UniRule"/>
</dbReference>
<dbReference type="CDD" id="cd09209">
    <property type="entry name" value="Lumazine_synthase-I"/>
    <property type="match status" value="1"/>
</dbReference>
<dbReference type="FunFam" id="3.40.50.960:FF:000001">
    <property type="entry name" value="6,7-dimethyl-8-ribityllumazine synthase"/>
    <property type="match status" value="1"/>
</dbReference>
<dbReference type="Gene3D" id="3.40.50.960">
    <property type="entry name" value="Lumazine/riboflavin synthase"/>
    <property type="match status" value="1"/>
</dbReference>
<dbReference type="HAMAP" id="MF_00178">
    <property type="entry name" value="Lumazine_synth"/>
    <property type="match status" value="1"/>
</dbReference>
<dbReference type="InterPro" id="IPR034964">
    <property type="entry name" value="LS"/>
</dbReference>
<dbReference type="InterPro" id="IPR002180">
    <property type="entry name" value="LS/RS"/>
</dbReference>
<dbReference type="InterPro" id="IPR036467">
    <property type="entry name" value="LS/RS_sf"/>
</dbReference>
<dbReference type="NCBIfam" id="TIGR00114">
    <property type="entry name" value="lumazine-synth"/>
    <property type="match status" value="1"/>
</dbReference>
<dbReference type="NCBIfam" id="NF000812">
    <property type="entry name" value="PRK00061.1-4"/>
    <property type="match status" value="1"/>
</dbReference>
<dbReference type="PANTHER" id="PTHR21058:SF0">
    <property type="entry name" value="6,7-DIMETHYL-8-RIBITYLLUMAZINE SYNTHASE"/>
    <property type="match status" value="1"/>
</dbReference>
<dbReference type="PANTHER" id="PTHR21058">
    <property type="entry name" value="6,7-DIMETHYL-8-RIBITYLLUMAZINE SYNTHASE DMRL SYNTHASE LUMAZINE SYNTHASE"/>
    <property type="match status" value="1"/>
</dbReference>
<dbReference type="Pfam" id="PF00885">
    <property type="entry name" value="DMRL_synthase"/>
    <property type="match status" value="1"/>
</dbReference>
<dbReference type="SUPFAM" id="SSF52121">
    <property type="entry name" value="Lumazine synthase"/>
    <property type="match status" value="1"/>
</dbReference>
<reference key="1">
    <citation type="submission" date="2008-06" db="EMBL/GenBank/DDBJ databases">
        <title>Complete sequence of Chlorobium phaeobacteroides BS1.</title>
        <authorList>
            <consortium name="US DOE Joint Genome Institute"/>
            <person name="Lucas S."/>
            <person name="Copeland A."/>
            <person name="Lapidus A."/>
            <person name="Glavina del Rio T."/>
            <person name="Dalin E."/>
            <person name="Tice H."/>
            <person name="Bruce D."/>
            <person name="Goodwin L."/>
            <person name="Pitluck S."/>
            <person name="Schmutz J."/>
            <person name="Larimer F."/>
            <person name="Land M."/>
            <person name="Hauser L."/>
            <person name="Kyrpides N."/>
            <person name="Ovchinnikova G."/>
            <person name="Li T."/>
            <person name="Liu Z."/>
            <person name="Zhao F."/>
            <person name="Overmann J."/>
            <person name="Bryant D.A."/>
            <person name="Richardson P."/>
        </authorList>
    </citation>
    <scope>NUCLEOTIDE SEQUENCE [LARGE SCALE GENOMIC DNA]</scope>
    <source>
        <strain>BS1</strain>
    </source>
</reference>